<protein>
    <recommendedName>
        <fullName>Non-structural protein P8</fullName>
    </recommendedName>
    <alternativeName>
        <fullName>Non-structural protein NS3</fullName>
    </alternativeName>
    <component>
        <recommendedName>
            <fullName>Non-structural protein NS3A</fullName>
        </recommendedName>
    </component>
</protein>
<organism>
    <name type="scientific">Bluetongue virus 10 (isolate USA)</name>
    <name type="common">BTV 10</name>
    <dbReference type="NCBI Taxonomy" id="10900"/>
    <lineage>
        <taxon>Viruses</taxon>
        <taxon>Riboviria</taxon>
        <taxon>Orthornavirae</taxon>
        <taxon>Duplornaviricota</taxon>
        <taxon>Resentoviricetes</taxon>
        <taxon>Reovirales</taxon>
        <taxon>Sedoreoviridae</taxon>
        <taxon>Orbivirus</taxon>
        <taxon>Bluetongue virus</taxon>
    </lineage>
</organism>
<accession>P08363</accession>
<sequence length="229" mass="25602">MLSGLIQRFEEEKMKHNQDRVEELSLVRVDDTISQPPRYAPSAPMPSSMPTVALEILDKAMSNTTGATQTQKAEKAAFASYAEAFRDDVRLRQIKRHVNEQILPKLKSDLSELKKKRAIIHTTLLVAAVVALLTSVCTLSSDMSVAFKINGTKTEVPSWFKSLNPMLGVVNLGATFLMMVCAKSERALNQQIDMIKKEVMKKQSYNDAVRMSFTEFSSIPLDGFEMPLT</sequence>
<proteinExistence type="evidence at protein level"/>
<gene>
    <name type="primary">Segment-10</name>
</gene>
<comment type="function">
    <text evidence="4 6">Plays a role in the inhibition of host innate immune response. Interacts with host OPTN and thus inhibits the recruitment of TBK1 to the host Golgi apparatus. In turn, downstream partner IRF3 cannot be activated and IFN-beta production is impaired.</text>
</comment>
<comment type="function">
    <text evidence="2 7">Facilitates viral particle release either by increasing plasma membrane permeability through a viroporin-like activity (PubMed:15292261) or by viral budding.</text>
</comment>
<comment type="subunit">
    <text evidence="2 5 6">Forms homooligomers via coiled-coil motif (PubMed:15292261, PubMed:26318174). Interacts with host OPTN; this interaction inhibits innate immune response (PubMed:27538435).</text>
</comment>
<comment type="subcellular location">
    <subcellularLocation>
        <location evidence="2 3">Host cell membrane</location>
        <topology evidence="1">Multi-pass membrane protein</topology>
    </subcellularLocation>
    <subcellularLocation>
        <location evidence="2 6">Host Golgi apparatus</location>
    </subcellularLocation>
</comment>
<comment type="similarity">
    <text evidence="8">Belongs to the orbivirus NS3 family.</text>
</comment>
<dbReference type="EMBL" id="M28981">
    <property type="protein sequence ID" value="AAA42840.1"/>
    <property type="molecule type" value="Genomic_RNA"/>
</dbReference>
<dbReference type="PIR" id="A29153">
    <property type="entry name" value="P8XR10"/>
</dbReference>
<dbReference type="RefSeq" id="YP_052960.1">
    <property type="nucleotide sequence ID" value="NC_006015.1"/>
</dbReference>
<dbReference type="SMR" id="P08363"/>
<dbReference type="ELM" id="P08363"/>
<dbReference type="KEGG" id="vg:2943154"/>
<dbReference type="Proteomes" id="UP000007662">
    <property type="component" value="Genome"/>
</dbReference>
<dbReference type="GO" id="GO:0044177">
    <property type="term" value="C:host cell Golgi apparatus"/>
    <property type="evidence" value="ECO:0007669"/>
    <property type="project" value="UniProtKB-SubCell"/>
</dbReference>
<dbReference type="GO" id="GO:0020002">
    <property type="term" value="C:host cell plasma membrane"/>
    <property type="evidence" value="ECO:0007669"/>
    <property type="project" value="UniProtKB-SubCell"/>
</dbReference>
<dbReference type="GO" id="GO:0016020">
    <property type="term" value="C:membrane"/>
    <property type="evidence" value="ECO:0007669"/>
    <property type="project" value="UniProtKB-KW"/>
</dbReference>
<dbReference type="GO" id="GO:0052170">
    <property type="term" value="P:symbiont-mediated suppression of host innate immune response"/>
    <property type="evidence" value="ECO:0007669"/>
    <property type="project" value="UniProtKB-KW"/>
</dbReference>
<dbReference type="InterPro" id="IPR002565">
    <property type="entry name" value="Orbi_NS3"/>
</dbReference>
<dbReference type="Pfam" id="PF01616">
    <property type="entry name" value="Orbi_NS3"/>
    <property type="match status" value="1"/>
</dbReference>
<reference key="1">
    <citation type="journal article" date="1986" name="J. Gen. Virol.">
        <title>Nucleotide sequence of a cDNA clone of RNA segment 10 of bluetongue virus (serotype 10).</title>
        <authorList>
            <person name="Lee J.W."/>
            <person name="Roy P."/>
        </authorList>
    </citation>
    <scope>NUCLEOTIDE SEQUENCE [GENOMIC RNA]</scope>
</reference>
<reference key="2">
    <citation type="journal article" date="1991" name="J. Gen. Virol.">
        <title>Localization of the non-structural protein NS3 in bluetongue virus-infected cells.</title>
        <authorList>
            <person name="Hyatt A.D."/>
            <person name="Gould A.R."/>
            <person name="Coupar B."/>
            <person name="Eaton B.T."/>
        </authorList>
    </citation>
    <scope>SUBCELLULAR LOCATION</scope>
</reference>
<reference key="3">
    <citation type="journal article" date="1993" name="Virology">
        <title>Release of bluetongue virus-like particles from insect cells is mediated by BTV nonstructural protein NS3/NS3A.</title>
        <authorList>
            <person name="Hyatt A.D."/>
            <person name="Zhao Y."/>
            <person name="Roy P."/>
        </authorList>
    </citation>
    <scope>FUNCTION</scope>
</reference>
<reference key="4">
    <citation type="journal article" date="2004" name="J. Biol. Chem.">
        <title>The NS3 protein of bluetongue virus exhibits viroporin-like properties.</title>
        <authorList>
            <person name="Han Z."/>
            <person name="Harty R.N."/>
        </authorList>
    </citation>
    <scope>FUNCTION</scope>
    <scope>SUBCELLULAR LOCATION</scope>
    <scope>SUBUNIT</scope>
</reference>
<reference key="5">
    <citation type="journal article" date="2013" name="J. Virol.">
        <title>NS3 of bluetongue virus interferes with the induction of type I interferon.</title>
        <authorList>
            <person name="Chauveau E."/>
            <person name="Doceul V."/>
            <person name="Lara E."/>
            <person name="Breard E."/>
            <person name="Sailleau C."/>
            <person name="Vidalain P.O."/>
            <person name="Meurs E.F."/>
            <person name="Dabo S."/>
            <person name="Schwartz-Cornil I."/>
            <person name="Zientara S."/>
            <person name="Vitour D."/>
        </authorList>
    </citation>
    <scope>FUNCTION</scope>
</reference>
<reference key="6">
    <citation type="journal article" date="2015" name="Virus Genes">
        <title>A coiled-coil motif in non-structural protein 3 (NS3) of bluetongue virus forms an oligomer.</title>
        <authorList>
            <person name="Chacko N."/>
            <person name="Mohanty N.N."/>
            <person name="Biswas S.K."/>
            <person name="Chand K."/>
            <person name="Yogisharadhya R."/>
            <person name="Pandey A.B."/>
            <person name="Mondal B."/>
            <person name="Shivachandra S.B."/>
        </authorList>
    </citation>
    <scope>SUBUNIT</scope>
</reference>
<reference key="7">
    <citation type="journal article" date="2016" name="BMC Biol.">
        <title>The Golgi apparatus acts as a platform for TBK1 activation after viral RNA sensing.</title>
        <authorList>
            <person name="Pourcelot M."/>
            <person name="Zemirli N."/>
            <person name="Silva Da Costa L."/>
            <person name="Loyant R."/>
            <person name="Garcin D."/>
            <person name="Vitour D."/>
            <person name="Munitic I."/>
            <person name="Vazquez A."/>
            <person name="Arnoult D."/>
        </authorList>
    </citation>
    <scope>FUNCTION</scope>
    <scope>SUBCELLULAR LOCATION</scope>
    <scope>INTERACTION WITH HOST OPTN</scope>
</reference>
<evidence type="ECO:0000255" key="1"/>
<evidence type="ECO:0000269" key="2">
    <source>
    </source>
</evidence>
<evidence type="ECO:0000269" key="3">
    <source>
    </source>
</evidence>
<evidence type="ECO:0000269" key="4">
    <source>
    </source>
</evidence>
<evidence type="ECO:0000269" key="5">
    <source>
    </source>
</evidence>
<evidence type="ECO:0000269" key="6">
    <source>
    </source>
</evidence>
<evidence type="ECO:0000269" key="7">
    <source>
    </source>
</evidence>
<evidence type="ECO:0000305" key="8"/>
<organismHost>
    <name type="scientific">Antilocapra americana</name>
    <name type="common">Pronghorn</name>
    <dbReference type="NCBI Taxonomy" id="9891"/>
</organismHost>
<organismHost>
    <name type="scientific">Bos taurus</name>
    <name type="common">Bovine</name>
    <dbReference type="NCBI Taxonomy" id="9913"/>
</organismHost>
<organismHost>
    <name type="scientific">Capra hircus</name>
    <name type="common">Goat</name>
    <dbReference type="NCBI Taxonomy" id="9925"/>
</organismHost>
<organismHost>
    <name type="scientific">Culicoides variipennis</name>
    <name type="common">Biting midge</name>
    <dbReference type="NCBI Taxonomy" id="46212"/>
</organismHost>
<organismHost>
    <name type="scientific">Ovis aries</name>
    <name type="common">Sheep</name>
    <dbReference type="NCBI Taxonomy" id="9940"/>
</organismHost>
<feature type="chain" id="PRO_0000040628" description="Non-structural protein P8">
    <location>
        <begin position="1"/>
        <end position="229"/>
    </location>
</feature>
<feature type="chain" id="PRO_0000040629" description="Non-structural protein NS3A">
    <location>
        <begin position="14"/>
        <end position="229"/>
    </location>
</feature>
<feature type="transmembrane region" description="Helical" evidence="1">
    <location>
        <begin position="119"/>
        <end position="139"/>
    </location>
</feature>
<feature type="transmembrane region" description="Helical" evidence="1">
    <location>
        <begin position="162"/>
        <end position="182"/>
    </location>
</feature>
<feature type="region of interest" description="CCM-I" evidence="5">
    <location>
        <begin position="14"/>
        <end position="26"/>
    </location>
</feature>
<feature type="region of interest" description="CCM-III" evidence="5">
    <location>
        <begin position="94"/>
        <end position="116"/>
    </location>
</feature>
<feature type="region of interest" description="CCM-II" evidence="5">
    <location>
        <begin position="185"/>
        <end position="198"/>
    </location>
</feature>
<keyword id="KW-1032">Host cell membrane</keyword>
<keyword id="KW-1040">Host Golgi apparatus</keyword>
<keyword id="KW-1043">Host membrane</keyword>
<keyword id="KW-0945">Host-virus interaction</keyword>
<keyword id="KW-1090">Inhibition of host innate immune response by virus</keyword>
<keyword id="KW-0472">Membrane</keyword>
<keyword id="KW-1185">Reference proteome</keyword>
<keyword id="KW-0812">Transmembrane</keyword>
<keyword id="KW-1133">Transmembrane helix</keyword>
<keyword id="KW-0899">Viral immunoevasion</keyword>
<name>VP8_BTV10</name>